<accession>B7JY30</accession>
<comment type="similarity">
    <text evidence="1">Belongs to the bacterial ribosomal protein bS16 family.</text>
</comment>
<name>RS16_RIPO1</name>
<protein>
    <recommendedName>
        <fullName evidence="1">Small ribosomal subunit protein bS16</fullName>
    </recommendedName>
    <alternativeName>
        <fullName evidence="2">30S ribosomal protein S16</fullName>
    </alternativeName>
</protein>
<evidence type="ECO:0000255" key="1">
    <source>
        <dbReference type="HAMAP-Rule" id="MF_00385"/>
    </source>
</evidence>
<evidence type="ECO:0000305" key="2"/>
<feature type="chain" id="PRO_1000196382" description="Small ribosomal subunit protein bS16">
    <location>
        <begin position="1"/>
        <end position="82"/>
    </location>
</feature>
<reference key="1">
    <citation type="journal article" date="2011" name="MBio">
        <title>Novel metabolic attributes of the genus Cyanothece, comprising a group of unicellular nitrogen-fixing Cyanobacteria.</title>
        <authorList>
            <person name="Bandyopadhyay A."/>
            <person name="Elvitigala T."/>
            <person name="Welsh E."/>
            <person name="Stockel J."/>
            <person name="Liberton M."/>
            <person name="Min H."/>
            <person name="Sherman L.A."/>
            <person name="Pakrasi H.B."/>
        </authorList>
    </citation>
    <scope>NUCLEOTIDE SEQUENCE [LARGE SCALE GENOMIC DNA]</scope>
    <source>
        <strain>PCC 8801 / RF-1</strain>
    </source>
</reference>
<organism>
    <name type="scientific">Rippkaea orientalis (strain PCC 8801 / RF-1)</name>
    <name type="common">Cyanothece sp. (strain PCC 8801)</name>
    <dbReference type="NCBI Taxonomy" id="41431"/>
    <lineage>
        <taxon>Bacteria</taxon>
        <taxon>Bacillati</taxon>
        <taxon>Cyanobacteriota</taxon>
        <taxon>Cyanophyceae</taxon>
        <taxon>Oscillatoriophycideae</taxon>
        <taxon>Chroococcales</taxon>
        <taxon>Aphanothecaceae</taxon>
        <taxon>Rippkaea</taxon>
        <taxon>Rippkaea orientalis</taxon>
    </lineage>
</organism>
<proteinExistence type="inferred from homology"/>
<gene>
    <name evidence="1" type="primary">rpsP</name>
    <name evidence="1" type="synonym">rps16</name>
    <name type="ordered locus">PCC8801_1956</name>
</gene>
<sequence length="82" mass="9501">MIKLRLKRYGKKREVSYRIVAINSSSRRDGRPLEELGFYNPRTDETRLNVPGIVKRLKEGAQPTETVRSILQKAQVFEQVNA</sequence>
<keyword id="KW-1185">Reference proteome</keyword>
<keyword id="KW-0687">Ribonucleoprotein</keyword>
<keyword id="KW-0689">Ribosomal protein</keyword>
<dbReference type="EMBL" id="CP001287">
    <property type="protein sequence ID" value="ACK65994.1"/>
    <property type="molecule type" value="Genomic_DNA"/>
</dbReference>
<dbReference type="RefSeq" id="WP_012595266.1">
    <property type="nucleotide sequence ID" value="NC_011726.1"/>
</dbReference>
<dbReference type="SMR" id="B7JY30"/>
<dbReference type="STRING" id="41431.PCC8801_1956"/>
<dbReference type="KEGG" id="cyp:PCC8801_1956"/>
<dbReference type="eggNOG" id="COG0228">
    <property type="taxonomic scope" value="Bacteria"/>
</dbReference>
<dbReference type="HOGENOM" id="CLU_100590_5_2_3"/>
<dbReference type="OrthoDB" id="9807878at2"/>
<dbReference type="Proteomes" id="UP000008204">
    <property type="component" value="Chromosome"/>
</dbReference>
<dbReference type="GO" id="GO:0005737">
    <property type="term" value="C:cytoplasm"/>
    <property type="evidence" value="ECO:0007669"/>
    <property type="project" value="UniProtKB-ARBA"/>
</dbReference>
<dbReference type="GO" id="GO:0015935">
    <property type="term" value="C:small ribosomal subunit"/>
    <property type="evidence" value="ECO:0007669"/>
    <property type="project" value="TreeGrafter"/>
</dbReference>
<dbReference type="GO" id="GO:0003735">
    <property type="term" value="F:structural constituent of ribosome"/>
    <property type="evidence" value="ECO:0007669"/>
    <property type="project" value="InterPro"/>
</dbReference>
<dbReference type="GO" id="GO:0006412">
    <property type="term" value="P:translation"/>
    <property type="evidence" value="ECO:0007669"/>
    <property type="project" value="UniProtKB-UniRule"/>
</dbReference>
<dbReference type="FunFam" id="3.30.1320.10:FF:000016">
    <property type="entry name" value="30S ribosomal protein S16"/>
    <property type="match status" value="1"/>
</dbReference>
<dbReference type="Gene3D" id="3.30.1320.10">
    <property type="match status" value="1"/>
</dbReference>
<dbReference type="HAMAP" id="MF_00385">
    <property type="entry name" value="Ribosomal_bS16"/>
    <property type="match status" value="1"/>
</dbReference>
<dbReference type="InterPro" id="IPR000307">
    <property type="entry name" value="Ribosomal_bS16"/>
</dbReference>
<dbReference type="InterPro" id="IPR020592">
    <property type="entry name" value="Ribosomal_bS16_CS"/>
</dbReference>
<dbReference type="InterPro" id="IPR023803">
    <property type="entry name" value="Ribosomal_bS16_dom_sf"/>
</dbReference>
<dbReference type="NCBIfam" id="TIGR00002">
    <property type="entry name" value="S16"/>
    <property type="match status" value="1"/>
</dbReference>
<dbReference type="PANTHER" id="PTHR12919">
    <property type="entry name" value="30S RIBOSOMAL PROTEIN S16"/>
    <property type="match status" value="1"/>
</dbReference>
<dbReference type="PANTHER" id="PTHR12919:SF20">
    <property type="entry name" value="SMALL RIBOSOMAL SUBUNIT PROTEIN BS16M"/>
    <property type="match status" value="1"/>
</dbReference>
<dbReference type="Pfam" id="PF00886">
    <property type="entry name" value="Ribosomal_S16"/>
    <property type="match status" value="1"/>
</dbReference>
<dbReference type="SUPFAM" id="SSF54565">
    <property type="entry name" value="Ribosomal protein S16"/>
    <property type="match status" value="1"/>
</dbReference>
<dbReference type="PROSITE" id="PS00732">
    <property type="entry name" value="RIBOSOMAL_S16"/>
    <property type="match status" value="1"/>
</dbReference>